<organism>
    <name type="scientific">Mycoplasma mycoides subsp. mycoides SC (strain CCUG 32753 / NCTC 10114 / PG1)</name>
    <dbReference type="NCBI Taxonomy" id="272632"/>
    <lineage>
        <taxon>Bacteria</taxon>
        <taxon>Bacillati</taxon>
        <taxon>Mycoplasmatota</taxon>
        <taxon>Mollicutes</taxon>
        <taxon>Mycoplasmataceae</taxon>
        <taxon>Mycoplasma</taxon>
    </lineage>
</organism>
<proteinExistence type="inferred from homology"/>
<name>SYC_MYCMS</name>
<reference key="1">
    <citation type="journal article" date="2004" name="Genome Res.">
        <title>The genome sequence of Mycoplasma mycoides subsp. mycoides SC type strain PG1T, the causative agent of contagious bovine pleuropneumonia (CBPP).</title>
        <authorList>
            <person name="Westberg J."/>
            <person name="Persson A."/>
            <person name="Holmberg A."/>
            <person name="Goesmann A."/>
            <person name="Lundeberg J."/>
            <person name="Johansson K.-E."/>
            <person name="Pettersson B."/>
            <person name="Uhlen M."/>
        </authorList>
    </citation>
    <scope>NUCLEOTIDE SEQUENCE [LARGE SCALE GENOMIC DNA]</scope>
    <source>
        <strain>CCUG 32753 / NCTC 10114 / PG1</strain>
    </source>
</reference>
<evidence type="ECO:0000255" key="1">
    <source>
        <dbReference type="HAMAP-Rule" id="MF_00041"/>
    </source>
</evidence>
<accession>Q6MS23</accession>
<feature type="chain" id="PRO_0000159431" description="Cysteine--tRNA ligase">
    <location>
        <begin position="1"/>
        <end position="441"/>
    </location>
</feature>
<feature type="short sequence motif" description="'HIGH' region">
    <location>
        <begin position="26"/>
        <end position="36"/>
    </location>
</feature>
<feature type="short sequence motif" description="'KMSKS' region">
    <location>
        <begin position="262"/>
        <end position="266"/>
    </location>
</feature>
<feature type="binding site" evidence="1">
    <location>
        <position position="24"/>
    </location>
    <ligand>
        <name>Zn(2+)</name>
        <dbReference type="ChEBI" id="CHEBI:29105"/>
    </ligand>
</feature>
<feature type="binding site" evidence="1">
    <location>
        <position position="204"/>
    </location>
    <ligand>
        <name>Zn(2+)</name>
        <dbReference type="ChEBI" id="CHEBI:29105"/>
    </ligand>
</feature>
<feature type="binding site" evidence="1">
    <location>
        <position position="230"/>
    </location>
    <ligand>
        <name>Zn(2+)</name>
        <dbReference type="ChEBI" id="CHEBI:29105"/>
    </ligand>
</feature>
<feature type="binding site" evidence="1">
    <location>
        <position position="234"/>
    </location>
    <ligand>
        <name>Zn(2+)</name>
        <dbReference type="ChEBI" id="CHEBI:29105"/>
    </ligand>
</feature>
<feature type="binding site" evidence="1">
    <location>
        <position position="265"/>
    </location>
    <ligand>
        <name>ATP</name>
        <dbReference type="ChEBI" id="CHEBI:30616"/>
    </ligand>
</feature>
<keyword id="KW-0030">Aminoacyl-tRNA synthetase</keyword>
<keyword id="KW-0067">ATP-binding</keyword>
<keyword id="KW-0963">Cytoplasm</keyword>
<keyword id="KW-0436">Ligase</keyword>
<keyword id="KW-0479">Metal-binding</keyword>
<keyword id="KW-0547">Nucleotide-binding</keyword>
<keyword id="KW-0648">Protein biosynthesis</keyword>
<keyword id="KW-1185">Reference proteome</keyword>
<keyword id="KW-0862">Zinc</keyword>
<dbReference type="EC" id="6.1.1.16" evidence="1"/>
<dbReference type="EMBL" id="BX293980">
    <property type="protein sequence ID" value="CAE77568.1"/>
    <property type="molecule type" value="Genomic_DNA"/>
</dbReference>
<dbReference type="RefSeq" id="NP_975926.1">
    <property type="nucleotide sequence ID" value="NC_005364.2"/>
</dbReference>
<dbReference type="RefSeq" id="WP_011167108.1">
    <property type="nucleotide sequence ID" value="NC_005364.2"/>
</dbReference>
<dbReference type="SMR" id="Q6MS23"/>
<dbReference type="STRING" id="272632.MSC_0959"/>
<dbReference type="KEGG" id="mmy:MSC_0959"/>
<dbReference type="PATRIC" id="fig|272632.4.peg.1042"/>
<dbReference type="eggNOG" id="COG0215">
    <property type="taxonomic scope" value="Bacteria"/>
</dbReference>
<dbReference type="HOGENOM" id="CLU_013528_0_0_14"/>
<dbReference type="Proteomes" id="UP000001016">
    <property type="component" value="Chromosome"/>
</dbReference>
<dbReference type="GO" id="GO:0005829">
    <property type="term" value="C:cytosol"/>
    <property type="evidence" value="ECO:0007669"/>
    <property type="project" value="TreeGrafter"/>
</dbReference>
<dbReference type="GO" id="GO:0005524">
    <property type="term" value="F:ATP binding"/>
    <property type="evidence" value="ECO:0007669"/>
    <property type="project" value="UniProtKB-UniRule"/>
</dbReference>
<dbReference type="GO" id="GO:0004817">
    <property type="term" value="F:cysteine-tRNA ligase activity"/>
    <property type="evidence" value="ECO:0007669"/>
    <property type="project" value="UniProtKB-UniRule"/>
</dbReference>
<dbReference type="GO" id="GO:0008270">
    <property type="term" value="F:zinc ion binding"/>
    <property type="evidence" value="ECO:0007669"/>
    <property type="project" value="UniProtKB-UniRule"/>
</dbReference>
<dbReference type="GO" id="GO:0006423">
    <property type="term" value="P:cysteinyl-tRNA aminoacylation"/>
    <property type="evidence" value="ECO:0007669"/>
    <property type="project" value="UniProtKB-UniRule"/>
</dbReference>
<dbReference type="CDD" id="cd00672">
    <property type="entry name" value="CysRS_core"/>
    <property type="match status" value="1"/>
</dbReference>
<dbReference type="Gene3D" id="1.20.120.1910">
    <property type="entry name" value="Cysteine-tRNA ligase, C-terminal anti-codon recognition domain"/>
    <property type="match status" value="1"/>
</dbReference>
<dbReference type="Gene3D" id="3.40.50.620">
    <property type="entry name" value="HUPs"/>
    <property type="match status" value="1"/>
</dbReference>
<dbReference type="HAMAP" id="MF_00041">
    <property type="entry name" value="Cys_tRNA_synth"/>
    <property type="match status" value="1"/>
</dbReference>
<dbReference type="InterPro" id="IPR015803">
    <property type="entry name" value="Cys-tRNA-ligase"/>
</dbReference>
<dbReference type="InterPro" id="IPR015273">
    <property type="entry name" value="Cys-tRNA-synt_Ia_DALR"/>
</dbReference>
<dbReference type="InterPro" id="IPR024909">
    <property type="entry name" value="Cys-tRNA/MSH_ligase"/>
</dbReference>
<dbReference type="InterPro" id="IPR014729">
    <property type="entry name" value="Rossmann-like_a/b/a_fold"/>
</dbReference>
<dbReference type="InterPro" id="IPR032678">
    <property type="entry name" value="tRNA-synt_1_cat_dom"/>
</dbReference>
<dbReference type="InterPro" id="IPR009080">
    <property type="entry name" value="tRNAsynth_Ia_anticodon-bd"/>
</dbReference>
<dbReference type="NCBIfam" id="TIGR00435">
    <property type="entry name" value="cysS"/>
    <property type="match status" value="1"/>
</dbReference>
<dbReference type="PANTHER" id="PTHR10890:SF3">
    <property type="entry name" value="CYSTEINE--TRNA LIGASE, CYTOPLASMIC"/>
    <property type="match status" value="1"/>
</dbReference>
<dbReference type="PANTHER" id="PTHR10890">
    <property type="entry name" value="CYSTEINYL-TRNA SYNTHETASE"/>
    <property type="match status" value="1"/>
</dbReference>
<dbReference type="Pfam" id="PF09190">
    <property type="entry name" value="DALR_2"/>
    <property type="match status" value="1"/>
</dbReference>
<dbReference type="Pfam" id="PF01406">
    <property type="entry name" value="tRNA-synt_1e"/>
    <property type="match status" value="1"/>
</dbReference>
<dbReference type="PRINTS" id="PR00983">
    <property type="entry name" value="TRNASYNTHCYS"/>
</dbReference>
<dbReference type="SMART" id="SM00840">
    <property type="entry name" value="DALR_2"/>
    <property type="match status" value="1"/>
</dbReference>
<dbReference type="SUPFAM" id="SSF47323">
    <property type="entry name" value="Anticodon-binding domain of a subclass of class I aminoacyl-tRNA synthetases"/>
    <property type="match status" value="1"/>
</dbReference>
<dbReference type="SUPFAM" id="SSF52374">
    <property type="entry name" value="Nucleotidylyl transferase"/>
    <property type="match status" value="1"/>
</dbReference>
<comment type="catalytic activity">
    <reaction evidence="1">
        <text>tRNA(Cys) + L-cysteine + ATP = L-cysteinyl-tRNA(Cys) + AMP + diphosphate</text>
        <dbReference type="Rhea" id="RHEA:17773"/>
        <dbReference type="Rhea" id="RHEA-COMP:9661"/>
        <dbReference type="Rhea" id="RHEA-COMP:9679"/>
        <dbReference type="ChEBI" id="CHEBI:30616"/>
        <dbReference type="ChEBI" id="CHEBI:33019"/>
        <dbReference type="ChEBI" id="CHEBI:35235"/>
        <dbReference type="ChEBI" id="CHEBI:78442"/>
        <dbReference type="ChEBI" id="CHEBI:78517"/>
        <dbReference type="ChEBI" id="CHEBI:456215"/>
        <dbReference type="EC" id="6.1.1.16"/>
    </reaction>
</comment>
<comment type="cofactor">
    <cofactor evidence="1">
        <name>Zn(2+)</name>
        <dbReference type="ChEBI" id="CHEBI:29105"/>
    </cofactor>
    <text evidence="1">Binds 1 zinc ion per subunit.</text>
</comment>
<comment type="subunit">
    <text evidence="1">Monomer.</text>
</comment>
<comment type="subcellular location">
    <subcellularLocation>
        <location evidence="1">Cytoplasm</location>
    </subcellularLocation>
</comment>
<comment type="similarity">
    <text evidence="1">Belongs to the class-I aminoacyl-tRNA synthetase family.</text>
</comment>
<sequence length="441" mass="51751">MQLYNSLSKTKKTLNKKTINLYCCGPTVYNYIHIGNARPILLVDVLIRYLKSRSIKVNYLQNITDIDDKIILKALENNLNELEVSQKYTSAYLEDLKSLNINQPDKIILISQKMNEMIDFIKNLVDINAAYVLDGDVYFDIKKYENEYCKLSGYKLDELISGKRVEIDSKKHYSLDFSLWKKTDIGIKWDSVFGLGRPGWHTECVLLIDEYFNHQTIDIHVGGIDLKFPHHENERIQFIAKNNKELAHIWLHNGHLQINDEKMSKSLGNVILVRDFIKKHNKNTLRWIFLTTNYTQPLNISDDLIYQANKFFEKLTNLSKKTIQFIIKKDLKIKSINSSEYINKFNEYMEDDLNTSLVLSLIDLLIKQINKNIVDKNLDNFNLLIGSLNYILDVLGFDNVFNYKFDNKTKELFLKWQELVKNKEFNKADLIRNKLIEQGIL</sequence>
<protein>
    <recommendedName>
        <fullName evidence="1">Cysteine--tRNA ligase</fullName>
        <ecNumber evidence="1">6.1.1.16</ecNumber>
    </recommendedName>
    <alternativeName>
        <fullName evidence="1">Cysteinyl-tRNA synthetase</fullName>
        <shortName evidence="1">CysRS</shortName>
    </alternativeName>
</protein>
<gene>
    <name evidence="1" type="primary">cysS</name>
    <name type="ordered locus">MSC_0959</name>
</gene>